<feature type="signal peptide" evidence="1">
    <location>
        <begin position="1"/>
        <end position="22"/>
    </location>
</feature>
<feature type="chain" id="PRO_5000142177" description="F17b-G fimbrial adhesin">
    <location>
        <begin position="23"/>
        <end position="343"/>
    </location>
</feature>
<feature type="region of interest" description="Receptor-binding lectin domain">
    <location>
        <begin position="23"/>
        <end position="199"/>
    </location>
</feature>
<feature type="region of interest" description="Fimbrillin-binding domain">
    <location>
        <begin position="200"/>
        <end position="343"/>
    </location>
</feature>
<feature type="region of interest" description="Disordered" evidence="2">
    <location>
        <begin position="287"/>
        <end position="307"/>
    </location>
</feature>
<feature type="compositionally biased region" description="Polar residues" evidence="2">
    <location>
        <begin position="298"/>
        <end position="307"/>
    </location>
</feature>
<feature type="binding site">
    <location>
        <begin position="65"/>
        <end position="66"/>
    </location>
    <ligand>
        <name>a carbohydrate</name>
        <dbReference type="ChEBI" id="CHEBI:16646"/>
    </ligand>
</feature>
<feature type="binding site">
    <location>
        <begin position="110"/>
        <end position="111"/>
    </location>
    <ligand>
        <name>a carbohydrate</name>
        <dbReference type="ChEBI" id="CHEBI:16646"/>
    </ligand>
</feature>
<feature type="binding site">
    <location>
        <begin position="138"/>
        <end position="141"/>
    </location>
    <ligand>
        <name>a carbohydrate</name>
        <dbReference type="ChEBI" id="CHEBI:16646"/>
    </ligand>
</feature>
<feature type="disulfide bond">
    <location>
        <begin position="75"/>
        <end position="132"/>
    </location>
</feature>
<feature type="strand" evidence="5">
    <location>
        <begin position="24"/>
        <end position="26"/>
    </location>
</feature>
<feature type="strand" evidence="5">
    <location>
        <begin position="30"/>
        <end position="35"/>
    </location>
</feature>
<feature type="strand" evidence="5">
    <location>
        <begin position="39"/>
        <end position="43"/>
    </location>
</feature>
<feature type="strand" evidence="5">
    <location>
        <begin position="49"/>
        <end position="53"/>
    </location>
</feature>
<feature type="strand" evidence="5">
    <location>
        <begin position="59"/>
        <end position="73"/>
    </location>
</feature>
<feature type="strand" evidence="5">
    <location>
        <begin position="75"/>
        <end position="82"/>
    </location>
</feature>
<feature type="strand" evidence="5">
    <location>
        <begin position="86"/>
        <end position="90"/>
    </location>
</feature>
<feature type="strand" evidence="5">
    <location>
        <begin position="93"/>
        <end position="112"/>
    </location>
</feature>
<feature type="helix" evidence="5">
    <location>
        <begin position="113"/>
        <end position="115"/>
    </location>
</feature>
<feature type="strand" evidence="7">
    <location>
        <begin position="116"/>
        <end position="118"/>
    </location>
</feature>
<feature type="strand" evidence="5">
    <location>
        <begin position="121"/>
        <end position="123"/>
    </location>
</feature>
<feature type="strand" evidence="5">
    <location>
        <begin position="125"/>
        <end position="132"/>
    </location>
</feature>
<feature type="strand" evidence="5">
    <location>
        <begin position="135"/>
        <end position="150"/>
    </location>
</feature>
<feature type="strand" evidence="6">
    <location>
        <begin position="155"/>
        <end position="157"/>
    </location>
</feature>
<feature type="strand" evidence="5">
    <location>
        <begin position="158"/>
        <end position="161"/>
    </location>
</feature>
<feature type="strand" evidence="5">
    <location>
        <begin position="164"/>
        <end position="173"/>
    </location>
</feature>
<feature type="strand" evidence="5">
    <location>
        <begin position="185"/>
        <end position="190"/>
    </location>
</feature>
<feature type="strand" evidence="5">
    <location>
        <begin position="193"/>
        <end position="197"/>
    </location>
</feature>
<keyword id="KW-0002">3D-structure</keyword>
<keyword id="KW-1015">Disulfide bond</keyword>
<keyword id="KW-0281">Fimbrium</keyword>
<keyword id="KW-0430">Lectin</keyword>
<keyword id="KW-0614">Plasmid</keyword>
<keyword id="KW-0732">Signal</keyword>
<keyword id="KW-0843">Virulence</keyword>
<sequence length="343" mass="36418">MTNFYKVFLAVFILVCCNISHAVVSFIGSTENDVGPSQGSYSSTHAMDNLPFVYNTGYNIGYQNANVWRIGGGFCVGLDGKVDLPVVGSLDGQSIYGLTEEVGLLIWMGDTNYSRGTAMSGNSWENVFSGWCVGNYLSTQGLSVHVRPVILKRNSSAQYSVQKTSIGSIRMRPYNGSSAGSVQTTVNFSLNPFTLNDTVTSCRLLTPSAVNVSLAAISAGQLPSSGDEVVAGTTSLKLQCDAGVTVWATLTDATTPSNRSDILTLTGASTATGVGLRIYKNTDSTPLKFGPDSPVKGNENQWQLSTGTETSPSVRLYVKYVNTGEGINPGTVNGISTFTFSYQ</sequence>
<proteinExistence type="evidence at protein level"/>
<evidence type="ECO:0000250" key="1"/>
<evidence type="ECO:0000256" key="2">
    <source>
        <dbReference type="SAM" id="MobiDB-lite"/>
    </source>
</evidence>
<evidence type="ECO:0000269" key="3">
    <source>
    </source>
</evidence>
<evidence type="ECO:0000305" key="4"/>
<evidence type="ECO:0007829" key="5">
    <source>
        <dbReference type="PDB" id="2BS7"/>
    </source>
</evidence>
<evidence type="ECO:0007829" key="6">
    <source>
        <dbReference type="PDB" id="2BS8"/>
    </source>
</evidence>
<evidence type="ECO:0007829" key="7">
    <source>
        <dbReference type="PDB" id="4K0O"/>
    </source>
</evidence>
<comment type="function">
    <text evidence="3">Essential fimbrial adhesion factor that mediates binding to N-acetylglucosamine-containing receptors in the host intestinal microvilli, leading to colonization of the intestinal tissue, and diarrhea or septicemia. Also confers adhesiveness to laminin and basement membranes.</text>
</comment>
<comment type="subcellular location">
    <subcellularLocation>
        <location evidence="1">Fimbrium</location>
    </subcellularLocation>
    <text evidence="1">Attached to the tip of the fimbrial filaments.</text>
</comment>
<comment type="similarity">
    <text evidence="4">Belongs to the fimbrial protein family.</text>
</comment>
<protein>
    <recommendedName>
        <fullName>F17b-G fimbrial adhesin</fullName>
    </recommendedName>
</protein>
<gene>
    <name type="primary">f17bG</name>
</gene>
<dbReference type="EMBL" id="L14319">
    <property type="protein sequence ID" value="AAA23736.1"/>
    <property type="molecule type" value="Genomic_DNA"/>
</dbReference>
<dbReference type="PIR" id="I41205">
    <property type="entry name" value="I41205"/>
</dbReference>
<dbReference type="RefSeq" id="WP_097737018.1">
    <property type="nucleotide sequence ID" value="NZ_NMKE01000099.1"/>
</dbReference>
<dbReference type="PDB" id="2BS7">
    <property type="method" value="X-ray"/>
    <property type="resolution" value="2.10 A"/>
    <property type="chains" value="1=23-198"/>
</dbReference>
<dbReference type="PDB" id="2BS8">
    <property type="method" value="X-ray"/>
    <property type="resolution" value="2.25 A"/>
    <property type="chains" value="A=23-198"/>
</dbReference>
<dbReference type="PDB" id="3FFO">
    <property type="method" value="X-ray"/>
    <property type="resolution" value="2.10 A"/>
    <property type="chains" value="A=23-198"/>
</dbReference>
<dbReference type="PDB" id="4K0O">
    <property type="method" value="X-ray"/>
    <property type="resolution" value="2.15 A"/>
    <property type="chains" value="A=23-198"/>
</dbReference>
<dbReference type="PDBsum" id="2BS7"/>
<dbReference type="PDBsum" id="2BS8"/>
<dbReference type="PDBsum" id="3FFO"/>
<dbReference type="PDBsum" id="4K0O"/>
<dbReference type="SMR" id="Q47200"/>
<dbReference type="UniLectin" id="Q47200"/>
<dbReference type="EvolutionaryTrace" id="Q47200"/>
<dbReference type="GO" id="GO:0009289">
    <property type="term" value="C:pilus"/>
    <property type="evidence" value="ECO:0007669"/>
    <property type="project" value="UniProtKB-SubCell"/>
</dbReference>
<dbReference type="GO" id="GO:0030246">
    <property type="term" value="F:carbohydrate binding"/>
    <property type="evidence" value="ECO:0007669"/>
    <property type="project" value="UniProtKB-KW"/>
</dbReference>
<dbReference type="GO" id="GO:0044406">
    <property type="term" value="P:adhesion of symbiont to host"/>
    <property type="evidence" value="ECO:0007669"/>
    <property type="project" value="InterPro"/>
</dbReference>
<dbReference type="GO" id="GO:0043709">
    <property type="term" value="P:cell adhesion involved in single-species biofilm formation"/>
    <property type="evidence" value="ECO:0007669"/>
    <property type="project" value="TreeGrafter"/>
</dbReference>
<dbReference type="Gene3D" id="2.60.40.1410">
    <property type="entry name" value="Bacterial adhesins - F17c-type"/>
    <property type="match status" value="1"/>
</dbReference>
<dbReference type="Gene3D" id="2.60.40.1090">
    <property type="entry name" value="Fimbrial-type adhesion domain"/>
    <property type="match status" value="1"/>
</dbReference>
<dbReference type="InterPro" id="IPR000259">
    <property type="entry name" value="Adhesion_dom_fimbrial"/>
</dbReference>
<dbReference type="InterPro" id="IPR036937">
    <property type="entry name" value="Adhesion_dom_fimbrial_sf"/>
</dbReference>
<dbReference type="InterPro" id="IPR008966">
    <property type="entry name" value="Adhesion_dom_sf"/>
</dbReference>
<dbReference type="InterPro" id="IPR050263">
    <property type="entry name" value="Bact_Fimbrial_Adh_Pro"/>
</dbReference>
<dbReference type="InterPro" id="IPR015303">
    <property type="entry name" value="Fimbrial_adhesin_lectin_dom"/>
</dbReference>
<dbReference type="PANTHER" id="PTHR33420">
    <property type="entry name" value="FIMBRIAL SUBUNIT ELFA-RELATED"/>
    <property type="match status" value="1"/>
</dbReference>
<dbReference type="PANTHER" id="PTHR33420:SF14">
    <property type="entry name" value="TYPE 1 FIMBRIN D-MANNOSE SPECIFIC ADHESIN"/>
    <property type="match status" value="1"/>
</dbReference>
<dbReference type="Pfam" id="PF09222">
    <property type="entry name" value="Fim-adh_lectin"/>
    <property type="match status" value="1"/>
</dbReference>
<dbReference type="Pfam" id="PF00419">
    <property type="entry name" value="Fimbrial"/>
    <property type="match status" value="1"/>
</dbReference>
<dbReference type="SUPFAM" id="SSF49401">
    <property type="entry name" value="Bacterial adhesins"/>
    <property type="match status" value="2"/>
</dbReference>
<organism>
    <name type="scientific">Escherichia coli</name>
    <dbReference type="NCBI Taxonomy" id="562"/>
    <lineage>
        <taxon>Bacteria</taxon>
        <taxon>Pseudomonadati</taxon>
        <taxon>Pseudomonadota</taxon>
        <taxon>Gammaproteobacteria</taxon>
        <taxon>Enterobacterales</taxon>
        <taxon>Enterobacteriaceae</taxon>
        <taxon>Escherichia</taxon>
    </lineage>
</organism>
<geneLocation type="plasmid">
    <name>Vir</name>
</geneLocation>
<reference key="1">
    <citation type="journal article" date="1994" name="Infect. Immun.">
        <title>F17-like fimbriae from an invasive Escherichia coli strain producing cytotoxic necrotizing factor type 2 toxin.</title>
        <authorList>
            <person name="el Mazouari K."/>
            <person name="Oswald E."/>
            <person name="Hernalsteens J.-P."/>
            <person name="Lintermans P.F.L."/>
            <person name="De Greve H.M.J."/>
        </authorList>
    </citation>
    <scope>NUCLEOTIDE SEQUENCE [GENOMIC DNA]</scope>
    <scope>FUNCTION</scope>
    <source>
        <strain>S5 / EIEC</strain>
    </source>
</reference>
<reference key="2">
    <citation type="journal article" date="2005" name="Acta Crystallogr. D">
        <title>Impact of natural variation in bacterial F17G adhesins on crystallization behaviour.</title>
        <authorList>
            <person name="Buts L."/>
            <person name="Wellens A."/>
            <person name="Van Molle I."/>
            <person name="Wyns L."/>
            <person name="Loris R."/>
            <person name="Lahmann M."/>
            <person name="Oscarson S."/>
            <person name="De Greve H.M.J."/>
            <person name="Bouckaert J."/>
        </authorList>
    </citation>
    <scope>X-RAY CRYSTALLOGRAPHY (2.25 ANGSTROMS) OF 23-198 IN COMPLEX WITH N-ACETYL-D-GLUCOSAMINE</scope>
</reference>
<accession>Q47200</accession>
<name>F17BG_ECOLX</name>